<protein>
    <recommendedName>
        <fullName>Fatty acid-binding protein 9</fullName>
    </recommendedName>
    <alternativeName>
        <fullName>15 kDa perforatorial protein</fullName>
        <shortName>PERF 15</shortName>
    </alternativeName>
    <alternativeName>
        <fullName>Testis lipid-binding protein</fullName>
        <shortName>TLBP</shortName>
    </alternativeName>
    <alternativeName>
        <fullName>Testis-type fatty acid-binding protein</fullName>
        <shortName>T-FABP</shortName>
    </alternativeName>
</protein>
<evidence type="ECO:0000250" key="1">
    <source>
        <dbReference type="UniProtKB" id="P55054"/>
    </source>
</evidence>
<evidence type="ECO:0000305" key="2"/>
<sequence>MIEPFLGTWKLISSENFENYVRELGVECEPRKVACLIKPSVSISFNGERMDIQAGSACRNTEISFKLGEEFEETTADNRKVKSLITFEGGSMIQVQKWLGKQTTIKRKIVDGKMVVECTMNNVVSTRIYERV</sequence>
<accession>O08716</accession>
<accession>Q9DAL2</accession>
<name>FABP9_MOUSE</name>
<comment type="subcellular location">
    <subcellularLocation>
        <location evidence="2">Cytoplasm</location>
    </subcellularLocation>
</comment>
<comment type="tissue specificity">
    <text>Testis.</text>
</comment>
<comment type="similarity">
    <text evidence="2">Belongs to the calycin superfamily. Fatty-acid binding protein (FABP) family.</text>
</comment>
<proteinExistence type="evidence at protein level"/>
<gene>
    <name type="primary">Fabp9</name>
    <name type="synonym">Perf15</name>
    <name type="synonym">Tlbp</name>
</gene>
<organism>
    <name type="scientific">Mus musculus</name>
    <name type="common">Mouse</name>
    <dbReference type="NCBI Taxonomy" id="10090"/>
    <lineage>
        <taxon>Eukaryota</taxon>
        <taxon>Metazoa</taxon>
        <taxon>Chordata</taxon>
        <taxon>Craniata</taxon>
        <taxon>Vertebrata</taxon>
        <taxon>Euteleostomi</taxon>
        <taxon>Mammalia</taxon>
        <taxon>Eutheria</taxon>
        <taxon>Euarchontoglires</taxon>
        <taxon>Glires</taxon>
        <taxon>Rodentia</taxon>
        <taxon>Myomorpha</taxon>
        <taxon>Muroidea</taxon>
        <taxon>Muridae</taxon>
        <taxon>Murinae</taxon>
        <taxon>Mus</taxon>
        <taxon>Mus</taxon>
    </lineage>
</organism>
<reference key="1">
    <citation type="journal article" date="1997" name="Biol. Reprod.">
        <title>Analysis of the protein composition of the mouse sperm perinuclear theca and characterization of its major protein constituent.</title>
        <authorList>
            <person name="Korley R."/>
            <person name="Pouresmaeili F."/>
            <person name="Oko R."/>
        </authorList>
    </citation>
    <scope>NUCLEOTIDE SEQUENCE [MRNA]</scope>
    <source>
        <strain>CD-1</strain>
        <tissue>Testis</tissue>
    </source>
</reference>
<reference key="2">
    <citation type="journal article" date="2005" name="Science">
        <title>The transcriptional landscape of the mammalian genome.</title>
        <authorList>
            <person name="Carninci P."/>
            <person name="Kasukawa T."/>
            <person name="Katayama S."/>
            <person name="Gough J."/>
            <person name="Frith M.C."/>
            <person name="Maeda N."/>
            <person name="Oyama R."/>
            <person name="Ravasi T."/>
            <person name="Lenhard B."/>
            <person name="Wells C."/>
            <person name="Kodzius R."/>
            <person name="Shimokawa K."/>
            <person name="Bajic V.B."/>
            <person name="Brenner S.E."/>
            <person name="Batalov S."/>
            <person name="Forrest A.R."/>
            <person name="Zavolan M."/>
            <person name="Davis M.J."/>
            <person name="Wilming L.G."/>
            <person name="Aidinis V."/>
            <person name="Allen J.E."/>
            <person name="Ambesi-Impiombato A."/>
            <person name="Apweiler R."/>
            <person name="Aturaliya R.N."/>
            <person name="Bailey T.L."/>
            <person name="Bansal M."/>
            <person name="Baxter L."/>
            <person name="Beisel K.W."/>
            <person name="Bersano T."/>
            <person name="Bono H."/>
            <person name="Chalk A.M."/>
            <person name="Chiu K.P."/>
            <person name="Choudhary V."/>
            <person name="Christoffels A."/>
            <person name="Clutterbuck D.R."/>
            <person name="Crowe M.L."/>
            <person name="Dalla E."/>
            <person name="Dalrymple B.P."/>
            <person name="de Bono B."/>
            <person name="Della Gatta G."/>
            <person name="di Bernardo D."/>
            <person name="Down T."/>
            <person name="Engstrom P."/>
            <person name="Fagiolini M."/>
            <person name="Faulkner G."/>
            <person name="Fletcher C.F."/>
            <person name="Fukushima T."/>
            <person name="Furuno M."/>
            <person name="Futaki S."/>
            <person name="Gariboldi M."/>
            <person name="Georgii-Hemming P."/>
            <person name="Gingeras T.R."/>
            <person name="Gojobori T."/>
            <person name="Green R.E."/>
            <person name="Gustincich S."/>
            <person name="Harbers M."/>
            <person name="Hayashi Y."/>
            <person name="Hensch T.K."/>
            <person name="Hirokawa N."/>
            <person name="Hill D."/>
            <person name="Huminiecki L."/>
            <person name="Iacono M."/>
            <person name="Ikeo K."/>
            <person name="Iwama A."/>
            <person name="Ishikawa T."/>
            <person name="Jakt M."/>
            <person name="Kanapin A."/>
            <person name="Katoh M."/>
            <person name="Kawasawa Y."/>
            <person name="Kelso J."/>
            <person name="Kitamura H."/>
            <person name="Kitano H."/>
            <person name="Kollias G."/>
            <person name="Krishnan S.P."/>
            <person name="Kruger A."/>
            <person name="Kummerfeld S.K."/>
            <person name="Kurochkin I.V."/>
            <person name="Lareau L.F."/>
            <person name="Lazarevic D."/>
            <person name="Lipovich L."/>
            <person name="Liu J."/>
            <person name="Liuni S."/>
            <person name="McWilliam S."/>
            <person name="Madan Babu M."/>
            <person name="Madera M."/>
            <person name="Marchionni L."/>
            <person name="Matsuda H."/>
            <person name="Matsuzawa S."/>
            <person name="Miki H."/>
            <person name="Mignone F."/>
            <person name="Miyake S."/>
            <person name="Morris K."/>
            <person name="Mottagui-Tabar S."/>
            <person name="Mulder N."/>
            <person name="Nakano N."/>
            <person name="Nakauchi H."/>
            <person name="Ng P."/>
            <person name="Nilsson R."/>
            <person name="Nishiguchi S."/>
            <person name="Nishikawa S."/>
            <person name="Nori F."/>
            <person name="Ohara O."/>
            <person name="Okazaki Y."/>
            <person name="Orlando V."/>
            <person name="Pang K.C."/>
            <person name="Pavan W.J."/>
            <person name="Pavesi G."/>
            <person name="Pesole G."/>
            <person name="Petrovsky N."/>
            <person name="Piazza S."/>
            <person name="Reed J."/>
            <person name="Reid J.F."/>
            <person name="Ring B.Z."/>
            <person name="Ringwald M."/>
            <person name="Rost B."/>
            <person name="Ruan Y."/>
            <person name="Salzberg S.L."/>
            <person name="Sandelin A."/>
            <person name="Schneider C."/>
            <person name="Schoenbach C."/>
            <person name="Sekiguchi K."/>
            <person name="Semple C.A."/>
            <person name="Seno S."/>
            <person name="Sessa L."/>
            <person name="Sheng Y."/>
            <person name="Shibata Y."/>
            <person name="Shimada H."/>
            <person name="Shimada K."/>
            <person name="Silva D."/>
            <person name="Sinclair B."/>
            <person name="Sperling S."/>
            <person name="Stupka E."/>
            <person name="Sugiura K."/>
            <person name="Sultana R."/>
            <person name="Takenaka Y."/>
            <person name="Taki K."/>
            <person name="Tammoja K."/>
            <person name="Tan S.L."/>
            <person name="Tang S."/>
            <person name="Taylor M.S."/>
            <person name="Tegner J."/>
            <person name="Teichmann S.A."/>
            <person name="Ueda H.R."/>
            <person name="van Nimwegen E."/>
            <person name="Verardo R."/>
            <person name="Wei C.L."/>
            <person name="Yagi K."/>
            <person name="Yamanishi H."/>
            <person name="Zabarovsky E."/>
            <person name="Zhu S."/>
            <person name="Zimmer A."/>
            <person name="Hide W."/>
            <person name="Bult C."/>
            <person name="Grimmond S.M."/>
            <person name="Teasdale R.D."/>
            <person name="Liu E.T."/>
            <person name="Brusic V."/>
            <person name="Quackenbush J."/>
            <person name="Wahlestedt C."/>
            <person name="Mattick J.S."/>
            <person name="Hume D.A."/>
            <person name="Kai C."/>
            <person name="Sasaki D."/>
            <person name="Tomaru Y."/>
            <person name="Fukuda S."/>
            <person name="Kanamori-Katayama M."/>
            <person name="Suzuki M."/>
            <person name="Aoki J."/>
            <person name="Arakawa T."/>
            <person name="Iida J."/>
            <person name="Imamura K."/>
            <person name="Itoh M."/>
            <person name="Kato T."/>
            <person name="Kawaji H."/>
            <person name="Kawagashira N."/>
            <person name="Kawashima T."/>
            <person name="Kojima M."/>
            <person name="Kondo S."/>
            <person name="Konno H."/>
            <person name="Nakano K."/>
            <person name="Ninomiya N."/>
            <person name="Nishio T."/>
            <person name="Okada M."/>
            <person name="Plessy C."/>
            <person name="Shibata K."/>
            <person name="Shiraki T."/>
            <person name="Suzuki S."/>
            <person name="Tagami M."/>
            <person name="Waki K."/>
            <person name="Watahiki A."/>
            <person name="Okamura-Oho Y."/>
            <person name="Suzuki H."/>
            <person name="Kawai J."/>
            <person name="Hayashizaki Y."/>
        </authorList>
    </citation>
    <scope>NUCLEOTIDE SEQUENCE [LARGE SCALE MRNA]</scope>
    <source>
        <strain>C57BL/6J</strain>
        <tissue>Testis</tissue>
    </source>
</reference>
<reference key="3">
    <citation type="journal article" date="2004" name="Genome Res.">
        <title>The status, quality, and expansion of the NIH full-length cDNA project: the Mammalian Gene Collection (MGC).</title>
        <authorList>
            <consortium name="The MGC Project Team"/>
        </authorList>
    </citation>
    <scope>NUCLEOTIDE SEQUENCE [LARGE SCALE MRNA]</scope>
    <source>
        <tissue>Testis</tissue>
    </source>
</reference>
<reference key="4">
    <citation type="journal article" date="2010" name="Cell">
        <title>A tissue-specific atlas of mouse protein phosphorylation and expression.</title>
        <authorList>
            <person name="Huttlin E.L."/>
            <person name="Jedrychowski M.P."/>
            <person name="Elias J.E."/>
            <person name="Goswami T."/>
            <person name="Rad R."/>
            <person name="Beausoleil S.A."/>
            <person name="Villen J."/>
            <person name="Haas W."/>
            <person name="Sowa M.E."/>
            <person name="Gygi S.P."/>
        </authorList>
    </citation>
    <scope>IDENTIFICATION BY MASS SPECTROMETRY [LARGE SCALE ANALYSIS]</scope>
    <source>
        <tissue>Testis</tissue>
    </source>
</reference>
<keyword id="KW-0963">Cytoplasm</keyword>
<keyword id="KW-0446">Lipid-binding</keyword>
<keyword id="KW-0597">Phosphoprotein</keyword>
<keyword id="KW-1185">Reference proteome</keyword>
<keyword id="KW-0813">Transport</keyword>
<dbReference type="EMBL" id="U96149">
    <property type="protein sequence ID" value="AAB53798.1"/>
    <property type="molecule type" value="mRNA"/>
</dbReference>
<dbReference type="EMBL" id="AK005745">
    <property type="protein sequence ID" value="BAB24218.1"/>
    <property type="molecule type" value="mRNA"/>
</dbReference>
<dbReference type="EMBL" id="AK161314">
    <property type="protein sequence ID" value="BAE36318.1"/>
    <property type="molecule type" value="mRNA"/>
</dbReference>
<dbReference type="EMBL" id="BC048437">
    <property type="protein sequence ID" value="AAH48437.1"/>
    <property type="molecule type" value="mRNA"/>
</dbReference>
<dbReference type="CCDS" id="CCDS17237.1"/>
<dbReference type="RefSeq" id="NP_035728.2">
    <property type="nucleotide sequence ID" value="NM_011598.3"/>
</dbReference>
<dbReference type="SMR" id="O08716"/>
<dbReference type="FunCoup" id="O08716">
    <property type="interactions" value="347"/>
</dbReference>
<dbReference type="STRING" id="10090.ENSMUSP00000029038"/>
<dbReference type="iPTMnet" id="O08716"/>
<dbReference type="PhosphoSitePlus" id="O08716"/>
<dbReference type="SwissPalm" id="O08716"/>
<dbReference type="REPRODUCTION-2DPAGE" id="IPI00396813"/>
<dbReference type="jPOST" id="O08716"/>
<dbReference type="PaxDb" id="10090-ENSMUSP00000029038"/>
<dbReference type="PeptideAtlas" id="O08716"/>
<dbReference type="ProteomicsDB" id="271549"/>
<dbReference type="DNASU" id="21884"/>
<dbReference type="Ensembl" id="ENSMUST00000029038.8">
    <property type="protein sequence ID" value="ENSMUSP00000029038.7"/>
    <property type="gene ID" value="ENSMUSG00000027528.13"/>
</dbReference>
<dbReference type="GeneID" id="21884"/>
<dbReference type="KEGG" id="mmu:21884"/>
<dbReference type="UCSC" id="uc008opj.2">
    <property type="organism name" value="mouse"/>
</dbReference>
<dbReference type="AGR" id="MGI:1194881"/>
<dbReference type="CTD" id="646480"/>
<dbReference type="MGI" id="MGI:1194881">
    <property type="gene designation" value="Fabp9"/>
</dbReference>
<dbReference type="VEuPathDB" id="HostDB:ENSMUSG00000027528"/>
<dbReference type="eggNOG" id="KOG4015">
    <property type="taxonomic scope" value="Eukaryota"/>
</dbReference>
<dbReference type="GeneTree" id="ENSGT00940000161845"/>
<dbReference type="HOGENOM" id="CLU_113772_0_0_1"/>
<dbReference type="InParanoid" id="O08716"/>
<dbReference type="OMA" id="AMIHVQK"/>
<dbReference type="OrthoDB" id="54761at9989"/>
<dbReference type="PhylomeDB" id="O08716"/>
<dbReference type="TreeFam" id="TF316894"/>
<dbReference type="Reactome" id="R-MMU-163560">
    <property type="pathway name" value="Triglyceride catabolism"/>
</dbReference>
<dbReference type="BioGRID-ORCS" id="21884">
    <property type="hits" value="1 hit in 78 CRISPR screens"/>
</dbReference>
<dbReference type="CD-CODE" id="DE1E139C">
    <property type="entry name" value="Chromatoid body"/>
</dbReference>
<dbReference type="ChiTaRS" id="Fabp9">
    <property type="organism name" value="mouse"/>
</dbReference>
<dbReference type="PRO" id="PR:O08716"/>
<dbReference type="Proteomes" id="UP000000589">
    <property type="component" value="Chromosome 3"/>
</dbReference>
<dbReference type="RNAct" id="O08716">
    <property type="molecule type" value="protein"/>
</dbReference>
<dbReference type="Bgee" id="ENSMUSG00000027528">
    <property type="expression patterns" value="Expressed in seminiferous tubule of testis and 28 other cell types or tissues"/>
</dbReference>
<dbReference type="ExpressionAtlas" id="O08716">
    <property type="expression patterns" value="baseline and differential"/>
</dbReference>
<dbReference type="GO" id="GO:0005737">
    <property type="term" value="C:cytoplasm"/>
    <property type="evidence" value="ECO:0007669"/>
    <property type="project" value="UniProtKB-SubCell"/>
</dbReference>
<dbReference type="GO" id="GO:0008289">
    <property type="term" value="F:lipid binding"/>
    <property type="evidence" value="ECO:0007669"/>
    <property type="project" value="UniProtKB-KW"/>
</dbReference>
<dbReference type="CDD" id="cd19471">
    <property type="entry name" value="FABP9"/>
    <property type="match status" value="1"/>
</dbReference>
<dbReference type="FunFam" id="2.40.128.20:FF:000001">
    <property type="entry name" value="Fatty acid-binding protein, adipocyte"/>
    <property type="match status" value="1"/>
</dbReference>
<dbReference type="Gene3D" id="2.40.128.20">
    <property type="match status" value="1"/>
</dbReference>
<dbReference type="InterPro" id="IPR012674">
    <property type="entry name" value="Calycin"/>
</dbReference>
<dbReference type="InterPro" id="IPR000463">
    <property type="entry name" value="Fatty_acid-bd"/>
</dbReference>
<dbReference type="InterPro" id="IPR031259">
    <property type="entry name" value="ILBP"/>
</dbReference>
<dbReference type="InterPro" id="IPR000566">
    <property type="entry name" value="Lipocln_cytosolic_FA-bd_dom"/>
</dbReference>
<dbReference type="PANTHER" id="PTHR11955">
    <property type="entry name" value="FATTY ACID BINDING PROTEIN"/>
    <property type="match status" value="1"/>
</dbReference>
<dbReference type="Pfam" id="PF00061">
    <property type="entry name" value="Lipocalin"/>
    <property type="match status" value="1"/>
</dbReference>
<dbReference type="PRINTS" id="PR00178">
    <property type="entry name" value="FATTYACIDBP"/>
</dbReference>
<dbReference type="SUPFAM" id="SSF50814">
    <property type="entry name" value="Lipocalins"/>
    <property type="match status" value="1"/>
</dbReference>
<dbReference type="PROSITE" id="PS00214">
    <property type="entry name" value="FABP"/>
    <property type="match status" value="1"/>
</dbReference>
<feature type="chain" id="PRO_0000067385" description="Fatty acid-binding protein 9">
    <location>
        <begin position="1"/>
        <end position="132"/>
    </location>
</feature>
<feature type="modified residue" description="Phosphoserine" evidence="1">
    <location>
        <position position="13"/>
    </location>
</feature>
<feature type="modified residue" description="Phosphoserine" evidence="1">
    <location>
        <position position="14"/>
    </location>
</feature>
<feature type="modified residue" description="Phosphoserine" evidence="1">
    <location>
        <position position="40"/>
    </location>
</feature>
<feature type="modified residue" description="Phosphoserine" evidence="1">
    <location>
        <position position="42"/>
    </location>
</feature>
<feature type="modified residue" description="Phosphoserine" evidence="1">
    <location>
        <position position="44"/>
    </location>
</feature>
<feature type="modified residue" description="Phosphoserine" evidence="1">
    <location>
        <position position="91"/>
    </location>
</feature>
<feature type="sequence conflict" description="In Ref. 1; AAB53798." evidence="2" ref="1">
    <original>I</original>
    <variation>V</variation>
    <location>
        <position position="12"/>
    </location>
</feature>
<feature type="sequence conflict" description="In Ref. 1; AAB53798." evidence="2" ref="1">
    <original>E</original>
    <variation>K</variation>
    <location>
        <position position="62"/>
    </location>
</feature>
<feature type="sequence conflict" description="In Ref. 1; AAB53798." evidence="2" ref="1">
    <original>V</original>
    <variation>I</variation>
    <location>
        <position position="95"/>
    </location>
</feature>
<feature type="sequence conflict" description="In Ref. 1; AAB53798." evidence="2" ref="1">
    <original>K</original>
    <variation>R</variation>
    <location>
        <position position="97"/>
    </location>
</feature>
<feature type="sequence conflict" description="In Ref. 1; AAB53798." evidence="2" ref="1">
    <original>K</original>
    <variation>R</variation>
    <location>
        <position position="108"/>
    </location>
</feature>
<feature type="sequence conflict" description="In Ref. 1; AAB53798." evidence="2" ref="1">
    <original>K</original>
    <variation>R</variation>
    <location>
        <position position="113"/>
    </location>
</feature>
<feature type="sequence conflict" description="In Ref. 1; AAB53798." evidence="2" ref="1">
    <original>I</original>
    <variation>T</variation>
    <location>
        <position position="128"/>
    </location>
</feature>